<evidence type="ECO:0000255" key="1">
    <source>
        <dbReference type="HAMAP-Rule" id="MF_00911"/>
    </source>
</evidence>
<evidence type="ECO:0000255" key="2">
    <source>
        <dbReference type="PROSITE-ProRule" id="PRU01115"/>
    </source>
</evidence>
<gene>
    <name evidence="1" type="primary">ftsQ</name>
</gene>
<dbReference type="EMBL" id="AF024659">
    <property type="protein sequence ID" value="AAC45819.1"/>
    <property type="molecule type" value="Genomic_DNA"/>
</dbReference>
<dbReference type="SMR" id="O30990"/>
<dbReference type="eggNOG" id="COG1589">
    <property type="taxonomic scope" value="Bacteria"/>
</dbReference>
<dbReference type="GO" id="GO:0005886">
    <property type="term" value="C:plasma membrane"/>
    <property type="evidence" value="ECO:0007669"/>
    <property type="project" value="UniProtKB-SubCell"/>
</dbReference>
<dbReference type="GO" id="GO:0090529">
    <property type="term" value="P:cell septum assembly"/>
    <property type="evidence" value="ECO:0007669"/>
    <property type="project" value="InterPro"/>
</dbReference>
<dbReference type="Gene3D" id="3.40.50.11690">
    <property type="entry name" value="Cell division protein FtsQ/DivIB"/>
    <property type="match status" value="1"/>
</dbReference>
<dbReference type="Gene3D" id="3.10.20.310">
    <property type="entry name" value="membrane protein fhac"/>
    <property type="match status" value="1"/>
</dbReference>
<dbReference type="HAMAP" id="MF_00911">
    <property type="entry name" value="FtsQ_subfam"/>
    <property type="match status" value="1"/>
</dbReference>
<dbReference type="InterPro" id="IPR005548">
    <property type="entry name" value="Cell_div_FtsQ/DivIB_C"/>
</dbReference>
<dbReference type="InterPro" id="IPR026579">
    <property type="entry name" value="FtsQ"/>
</dbReference>
<dbReference type="InterPro" id="IPR045335">
    <property type="entry name" value="FtsQ_C_sf"/>
</dbReference>
<dbReference type="InterPro" id="IPR034746">
    <property type="entry name" value="POTRA"/>
</dbReference>
<dbReference type="InterPro" id="IPR013685">
    <property type="entry name" value="POTRA_FtsQ_type"/>
</dbReference>
<dbReference type="PANTHER" id="PTHR35851">
    <property type="entry name" value="CELL DIVISION PROTEIN FTSQ"/>
    <property type="match status" value="1"/>
</dbReference>
<dbReference type="PANTHER" id="PTHR35851:SF1">
    <property type="entry name" value="CELL DIVISION PROTEIN FTSQ"/>
    <property type="match status" value="1"/>
</dbReference>
<dbReference type="Pfam" id="PF03799">
    <property type="entry name" value="FtsQ_DivIB_C"/>
    <property type="match status" value="1"/>
</dbReference>
<dbReference type="Pfam" id="PF08478">
    <property type="entry name" value="POTRA_1"/>
    <property type="match status" value="1"/>
</dbReference>
<dbReference type="PROSITE" id="PS51779">
    <property type="entry name" value="POTRA"/>
    <property type="match status" value="1"/>
</dbReference>
<organism>
    <name type="scientific">Rhizobium radiobacter</name>
    <name type="common">Agrobacterium tumefaciens</name>
    <name type="synonym">Agrobacterium radiobacter</name>
    <dbReference type="NCBI Taxonomy" id="358"/>
    <lineage>
        <taxon>Bacteria</taxon>
        <taxon>Pseudomonadati</taxon>
        <taxon>Pseudomonadota</taxon>
        <taxon>Alphaproteobacteria</taxon>
        <taxon>Hyphomicrobiales</taxon>
        <taxon>Rhizobiaceae</taxon>
        <taxon>Rhizobium/Agrobacterium group</taxon>
        <taxon>Agrobacterium</taxon>
        <taxon>Agrobacterium tumefaciens complex</taxon>
    </lineage>
</organism>
<sequence>LQTSEIEVFQLLGLDGSTSLIALDIDAARRKLVQLPWVEDVDIRKVYPKTVEVRLKERQAFGIWQHGTELSLIEKSGSVIAPLRDNKFAALPLFVGRDAETGAAGFVAQLADWPEIRNRVRAYVRIAGRRWDLHLDNGIVVKLPEENLPQALQLLARLDLEEKVLSRDVAAVDLRLTDRTTIQLTEGAAERRQTAVDARTKALKKAEKNT</sequence>
<keyword id="KW-0131">Cell cycle</keyword>
<keyword id="KW-0132">Cell division</keyword>
<keyword id="KW-0997">Cell inner membrane</keyword>
<keyword id="KW-1003">Cell membrane</keyword>
<keyword id="KW-0472">Membrane</keyword>
<keyword id="KW-0812">Transmembrane</keyword>
<keyword id="KW-1133">Transmembrane helix</keyword>
<accession>O30990</accession>
<reference key="1">
    <citation type="journal article" date="1997" name="J. Bacteriol.">
        <title>Interactions between heterologous FtsA and FtsZ proteins at the FtsZ ring.</title>
        <authorList>
            <person name="Ma X."/>
            <person name="Sun Q."/>
            <person name="Wang R."/>
            <person name="Singh G."/>
            <person name="Jonietz E.L."/>
            <person name="Margolin W."/>
        </authorList>
    </citation>
    <scope>NUCLEOTIDE SEQUENCE [GENOMIC DNA]</scope>
    <source>
        <strain>A136</strain>
    </source>
</reference>
<name>FTSQ_RHIRD</name>
<proteinExistence type="inferred from homology"/>
<comment type="function">
    <text evidence="1">Essential cell division protein.</text>
</comment>
<comment type="subcellular location">
    <subcellularLocation>
        <location evidence="1">Cell inner membrane</location>
        <topology evidence="1">Single-pass type II membrane protein</topology>
    </subcellularLocation>
    <text evidence="1">Localizes to the division septum.</text>
</comment>
<comment type="similarity">
    <text evidence="1">Belongs to the FtsQ/DivIB family. FtsQ subfamily.</text>
</comment>
<feature type="chain" id="PRO_0000160576" description="Cell division protein FtsQ">
    <location>
        <begin position="1" status="less than"/>
        <end position="210"/>
    </location>
</feature>
<feature type="transmembrane region" description="Helical" evidence="1">
    <location>
        <begin position="8"/>
        <end position="25"/>
    </location>
</feature>
<feature type="domain" description="POTRA" evidence="2">
    <location>
        <begin position="1" status="less than"/>
        <end position="58"/>
    </location>
</feature>
<feature type="non-terminal residue">
    <location>
        <position position="1"/>
    </location>
</feature>
<protein>
    <recommendedName>
        <fullName evidence="1">Cell division protein FtsQ</fullName>
    </recommendedName>
</protein>